<sequence>MSPFASESAWLCLAAAAVLGGTLLCGCRSGRQLRSQAVCLAGLWGGACLLSLSLLCTLFLLSVACFLLLYMSSSDQDLLPVDQKAVLVTGADSGFGHGLAKHLDKLGFTVFAGVLDKEGPGAEELRKHCSERLSVLQMDVTKPEQIKDAHSKVTEKIQDKGLWAVVNNAGVFHLPIDGELIPMSIYRKCMAVNFFGTVEVTKAFLPLLRKSKGRLVNVSSMGGTVPLQMTSAYAATKAALTMFSTIIRQELDKWGVKVVTIKPGGFKTNITGSQDIWDKMEKEILDHFSKDIQENYGQDYVHTQKLIIPTLKERSNPDITPVLRDIQHAISARNPSSFYYPGRMAYLWVCLAAYCPTSLLDYVIKKGFYPQPTPRALRTVH</sequence>
<evidence type="ECO:0000250" key="1"/>
<evidence type="ECO:0000250" key="2">
    <source>
        <dbReference type="UniProtKB" id="P37059"/>
    </source>
</evidence>
<evidence type="ECO:0000255" key="3"/>
<evidence type="ECO:0000255" key="4">
    <source>
        <dbReference type="PROSITE-ProRule" id="PRU10001"/>
    </source>
</evidence>
<evidence type="ECO:0000305" key="5"/>
<proteinExistence type="evidence at protein level"/>
<keyword id="KW-0256">Endoplasmic reticulum</keyword>
<keyword id="KW-0444">Lipid biosynthesis</keyword>
<keyword id="KW-0443">Lipid metabolism</keyword>
<keyword id="KW-0472">Membrane</keyword>
<keyword id="KW-0520">NAD</keyword>
<keyword id="KW-0560">Oxidoreductase</keyword>
<keyword id="KW-1185">Reference proteome</keyword>
<keyword id="KW-0735">Signal-anchor</keyword>
<keyword id="KW-0752">Steroid biosynthesis</keyword>
<keyword id="KW-0812">Transmembrane</keyword>
<keyword id="KW-1133">Transmembrane helix</keyword>
<reference key="1">
    <citation type="journal article" date="1997" name="Biochem. J.">
        <title>Cloning of mouse 17beta-hydroxysteroid dehydrogenase type 2, and analysing expression of the mRNAs for types 1, 2, 3, 4 and 5 in mouse embryos and adult tissues.</title>
        <authorList>
            <person name="Mustonen M."/>
        </authorList>
    </citation>
    <scope>NUCLEOTIDE SEQUENCE [MRNA]</scope>
    <source>
        <strain>BALB/cJ</strain>
        <tissue>Liver</tissue>
    </source>
</reference>
<reference key="2">
    <citation type="submission" date="1996-02" db="EMBL/GenBank/DDBJ databases">
        <authorList>
            <person name="Stoffel W."/>
            <person name="Weiss B."/>
        </authorList>
    </citation>
    <scope>NUCLEOTIDE SEQUENCE [MRNA] OF 1-358</scope>
    <source>
        <strain>BALB/cJ</strain>
    </source>
</reference>
<reference key="3">
    <citation type="journal article" date="2010" name="Cell">
        <title>A tissue-specific atlas of mouse protein phosphorylation and expression.</title>
        <authorList>
            <person name="Huttlin E.L."/>
            <person name="Jedrychowski M.P."/>
            <person name="Elias J.E."/>
            <person name="Goswami T."/>
            <person name="Rad R."/>
            <person name="Beausoleil S.A."/>
            <person name="Villen J."/>
            <person name="Haas W."/>
            <person name="Sowa M.E."/>
            <person name="Gygi S.P."/>
        </authorList>
    </citation>
    <scope>IDENTIFICATION BY MASS SPECTROMETRY [LARGE SCALE ANALYSIS]</scope>
    <source>
        <tissue>Liver</tissue>
    </source>
</reference>
<comment type="function">
    <text evidence="2">Catalyzes the NAD-dependent oxidation of highly active 17beta-hydroxysteroids, such as estradiol (E2), testosterone (T), and dihydrotestosterone (DHT), to their less active forms and thus regulates the biological potency of these steroids. Oxidizes estradiol to estrone, testosterone to androstenedione, and dihydrotestosterone to 5alpha-androstan-3,17-dione. Also has 20-alpha-HSD activity.</text>
</comment>
<comment type="catalytic activity">
    <reaction evidence="2">
        <text>17beta-estradiol + NAD(+) = estrone + NADH + H(+)</text>
        <dbReference type="Rhea" id="RHEA:24612"/>
        <dbReference type="ChEBI" id="CHEBI:15378"/>
        <dbReference type="ChEBI" id="CHEBI:16469"/>
        <dbReference type="ChEBI" id="CHEBI:17263"/>
        <dbReference type="ChEBI" id="CHEBI:57540"/>
        <dbReference type="ChEBI" id="CHEBI:57945"/>
        <dbReference type="EC" id="1.1.1.62"/>
    </reaction>
    <physiologicalReaction direction="left-to-right" evidence="2">
        <dbReference type="Rhea" id="RHEA:24613"/>
    </physiologicalReaction>
    <physiologicalReaction direction="right-to-left" evidence="2">
        <dbReference type="Rhea" id="RHEA:24614"/>
    </physiologicalReaction>
</comment>
<comment type="catalytic activity">
    <reaction evidence="2">
        <text>testosterone + NAD(+) = androst-4-ene-3,17-dione + NADH + H(+)</text>
        <dbReference type="Rhea" id="RHEA:14929"/>
        <dbReference type="ChEBI" id="CHEBI:15378"/>
        <dbReference type="ChEBI" id="CHEBI:16422"/>
        <dbReference type="ChEBI" id="CHEBI:17347"/>
        <dbReference type="ChEBI" id="CHEBI:57540"/>
        <dbReference type="ChEBI" id="CHEBI:57945"/>
        <dbReference type="EC" id="1.1.1.239"/>
    </reaction>
    <physiologicalReaction direction="left-to-right" evidence="2">
        <dbReference type="Rhea" id="RHEA:14930"/>
    </physiologicalReaction>
    <physiologicalReaction direction="right-to-left" evidence="2">
        <dbReference type="Rhea" id="RHEA:14931"/>
    </physiologicalReaction>
</comment>
<comment type="catalytic activity">
    <reaction evidence="2">
        <text>17beta-hydroxy-5alpha-androstan-3-one + NAD(+) = 5alpha-androstan-3,17-dione + NADH + H(+)</text>
        <dbReference type="Rhea" id="RHEA:41992"/>
        <dbReference type="ChEBI" id="CHEBI:15378"/>
        <dbReference type="ChEBI" id="CHEBI:15994"/>
        <dbReference type="ChEBI" id="CHEBI:16330"/>
        <dbReference type="ChEBI" id="CHEBI:57540"/>
        <dbReference type="ChEBI" id="CHEBI:57945"/>
    </reaction>
</comment>
<comment type="catalytic activity">
    <reaction evidence="2">
        <text>(20S)-hydroxypregn-4-en-3-one + NAD(+) = progesterone + NADH + H(+)</text>
        <dbReference type="Rhea" id="RHEA:42108"/>
        <dbReference type="ChEBI" id="CHEBI:15378"/>
        <dbReference type="ChEBI" id="CHEBI:17026"/>
        <dbReference type="ChEBI" id="CHEBI:28453"/>
        <dbReference type="ChEBI" id="CHEBI:57540"/>
        <dbReference type="ChEBI" id="CHEBI:57945"/>
    </reaction>
</comment>
<comment type="subunit">
    <text evidence="2">Homodimer.</text>
</comment>
<comment type="subcellular location">
    <subcellularLocation>
        <location evidence="2">Endoplasmic reticulum membrane</location>
        <topology evidence="2">Single-pass type II membrane protein</topology>
    </subcellularLocation>
</comment>
<comment type="similarity">
    <text evidence="5">Belongs to the short-chain dehydrogenases/reductases (SDR) family.</text>
</comment>
<protein>
    <recommendedName>
        <fullName>Estradiol 17-beta-dehydrogenase 2</fullName>
        <ecNumber evidence="2">1.1.1.62</ecNumber>
    </recommendedName>
    <alternativeName>
        <fullName>17-beta-hydroxysteroid dehydrogenase type 2</fullName>
        <shortName>17-beta-HSD 2</shortName>
    </alternativeName>
    <alternativeName>
        <fullName>Testosterone 17-beta-dehydrogenase</fullName>
        <ecNumber evidence="2">1.1.1.239</ecNumber>
    </alternativeName>
</protein>
<name>DHB2_MOUSE</name>
<feature type="chain" id="PRO_0000054571" description="Estradiol 17-beta-dehydrogenase 2">
    <location>
        <begin position="1"/>
        <end position="381"/>
    </location>
</feature>
<feature type="transmembrane region" description="Helical; Signal-anchor for type II membrane protein" evidence="3">
    <location>
        <begin position="4"/>
        <end position="24"/>
    </location>
</feature>
<feature type="active site" description="Proton acceptor" evidence="4">
    <location>
        <position position="233"/>
    </location>
</feature>
<feature type="binding site" evidence="1">
    <location>
        <begin position="83"/>
        <end position="112"/>
    </location>
    <ligand>
        <name>NAD(+)</name>
        <dbReference type="ChEBI" id="CHEBI:57540"/>
    </ligand>
</feature>
<feature type="binding site" evidence="1">
    <location>
        <position position="220"/>
    </location>
    <ligand>
        <name>substrate</name>
    </ligand>
</feature>
<feature type="sequence conflict" description="In Ref. 2; CAA64982." evidence="5" ref="2">
    <original>QA</original>
    <variation>RP</variation>
    <location>
        <begin position="36"/>
        <end position="37"/>
    </location>
</feature>
<accession>P51658</accession>
<accession>O08898</accession>
<organism>
    <name type="scientific">Mus musculus</name>
    <name type="common">Mouse</name>
    <dbReference type="NCBI Taxonomy" id="10090"/>
    <lineage>
        <taxon>Eukaryota</taxon>
        <taxon>Metazoa</taxon>
        <taxon>Chordata</taxon>
        <taxon>Craniata</taxon>
        <taxon>Vertebrata</taxon>
        <taxon>Euteleostomi</taxon>
        <taxon>Mammalia</taxon>
        <taxon>Eutheria</taxon>
        <taxon>Euarchontoglires</taxon>
        <taxon>Glires</taxon>
        <taxon>Rodentia</taxon>
        <taxon>Myomorpha</taxon>
        <taxon>Muroidea</taxon>
        <taxon>Muridae</taxon>
        <taxon>Murinae</taxon>
        <taxon>Mus</taxon>
        <taxon>Mus</taxon>
    </lineage>
</organism>
<gene>
    <name type="primary">Hsd17b2</name>
    <name type="synonym">Edh17b2</name>
</gene>
<dbReference type="EC" id="1.1.1.62" evidence="2"/>
<dbReference type="EC" id="1.1.1.239" evidence="2"/>
<dbReference type="EMBL" id="Y09517">
    <property type="protein sequence ID" value="CAA70706.1"/>
    <property type="molecule type" value="mRNA"/>
</dbReference>
<dbReference type="EMBL" id="X95685">
    <property type="protein sequence ID" value="CAA64982.1"/>
    <property type="molecule type" value="mRNA"/>
</dbReference>
<dbReference type="CCDS" id="CCDS40491.1"/>
<dbReference type="RefSeq" id="NP_032316.2">
    <property type="nucleotide sequence ID" value="NM_008290.3"/>
</dbReference>
<dbReference type="SMR" id="P51658"/>
<dbReference type="FunCoup" id="P51658">
    <property type="interactions" value="365"/>
</dbReference>
<dbReference type="STRING" id="10090.ENSMUSP00000034304"/>
<dbReference type="BindingDB" id="P51658"/>
<dbReference type="ChEMBL" id="CHEMBL1914270"/>
<dbReference type="GuidetoPHARMACOLOGY" id="3094"/>
<dbReference type="GlyGen" id="P51658">
    <property type="glycosylation" value="2 sites, 1 O-linked glycan (1 site)"/>
</dbReference>
<dbReference type="iPTMnet" id="P51658"/>
<dbReference type="PhosphoSitePlus" id="P51658"/>
<dbReference type="SwissPalm" id="P51658"/>
<dbReference type="jPOST" id="P51658"/>
<dbReference type="PaxDb" id="10090-ENSMUSP00000034304"/>
<dbReference type="PeptideAtlas" id="P51658"/>
<dbReference type="ProteomicsDB" id="279353"/>
<dbReference type="Antibodypedia" id="16980">
    <property type="antibodies" value="314 antibodies from 32 providers"/>
</dbReference>
<dbReference type="DNASU" id="15486"/>
<dbReference type="Ensembl" id="ENSMUST00000034304.9">
    <property type="protein sequence ID" value="ENSMUSP00000034304.8"/>
    <property type="gene ID" value="ENSMUSG00000031844.9"/>
</dbReference>
<dbReference type="GeneID" id="15486"/>
<dbReference type="KEGG" id="mmu:15486"/>
<dbReference type="UCSC" id="uc009npf.1">
    <property type="organism name" value="mouse"/>
</dbReference>
<dbReference type="AGR" id="MGI:1096386"/>
<dbReference type="CTD" id="3294"/>
<dbReference type="MGI" id="MGI:1096386">
    <property type="gene designation" value="Hsd17b2"/>
</dbReference>
<dbReference type="VEuPathDB" id="HostDB:ENSMUSG00000031844"/>
<dbReference type="eggNOG" id="KOG1610">
    <property type="taxonomic scope" value="Eukaryota"/>
</dbReference>
<dbReference type="GeneTree" id="ENSGT00940000160204"/>
<dbReference type="HOGENOM" id="CLU_010194_2_0_1"/>
<dbReference type="InParanoid" id="P51658"/>
<dbReference type="OMA" id="KKCMAVN"/>
<dbReference type="OrthoDB" id="9876299at2759"/>
<dbReference type="PhylomeDB" id="P51658"/>
<dbReference type="TreeFam" id="TF325617"/>
<dbReference type="BRENDA" id="1.1.1.62">
    <property type="organism ID" value="3474"/>
</dbReference>
<dbReference type="Reactome" id="R-MMU-193144">
    <property type="pathway name" value="Estrogen biosynthesis"/>
</dbReference>
<dbReference type="BioGRID-ORCS" id="15486">
    <property type="hits" value="7 hits in 80 CRISPR screens"/>
</dbReference>
<dbReference type="ChiTaRS" id="Hsd17b2">
    <property type="organism name" value="mouse"/>
</dbReference>
<dbReference type="PRO" id="PR:P51658"/>
<dbReference type="Proteomes" id="UP000000589">
    <property type="component" value="Chromosome 8"/>
</dbReference>
<dbReference type="RNAct" id="P51658">
    <property type="molecule type" value="protein"/>
</dbReference>
<dbReference type="Bgee" id="ENSMUSG00000031844">
    <property type="expression patterns" value="Expressed in placenta labyrinth and 74 other cell types or tissues"/>
</dbReference>
<dbReference type="ExpressionAtlas" id="P51658">
    <property type="expression patterns" value="baseline and differential"/>
</dbReference>
<dbReference type="GO" id="GO:0005789">
    <property type="term" value="C:endoplasmic reticulum membrane"/>
    <property type="evidence" value="ECO:0000250"/>
    <property type="project" value="UniProtKB"/>
</dbReference>
<dbReference type="GO" id="GO:0004303">
    <property type="term" value="F:estradiol 17-beta-dehydrogenase [NAD(P)+] activity"/>
    <property type="evidence" value="ECO:0007669"/>
    <property type="project" value="UniProtKB-EC"/>
</dbReference>
<dbReference type="GO" id="GO:0047035">
    <property type="term" value="F:testosterone dehydrogenase (NAD+) activity"/>
    <property type="evidence" value="ECO:0007669"/>
    <property type="project" value="UniProtKB-EC"/>
</dbReference>
<dbReference type="GO" id="GO:0008209">
    <property type="term" value="P:androgen metabolic process"/>
    <property type="evidence" value="ECO:0000250"/>
    <property type="project" value="UniProtKB"/>
</dbReference>
<dbReference type="GO" id="GO:0006703">
    <property type="term" value="P:estrogen biosynthetic process"/>
    <property type="evidence" value="ECO:0000250"/>
    <property type="project" value="UniProtKB"/>
</dbReference>
<dbReference type="GO" id="GO:0001701">
    <property type="term" value="P:in utero embryonic development"/>
    <property type="evidence" value="ECO:0000315"/>
    <property type="project" value="MGI"/>
</dbReference>
<dbReference type="GO" id="GO:0001890">
    <property type="term" value="P:placenta development"/>
    <property type="evidence" value="ECO:0000315"/>
    <property type="project" value="MGI"/>
</dbReference>
<dbReference type="GO" id="GO:0032526">
    <property type="term" value="P:response to retinoic acid"/>
    <property type="evidence" value="ECO:0007669"/>
    <property type="project" value="Ensembl"/>
</dbReference>
<dbReference type="CDD" id="cd09805">
    <property type="entry name" value="type2_17beta_HSD-like_SDR_c"/>
    <property type="match status" value="1"/>
</dbReference>
<dbReference type="FunFam" id="3.40.50.720:FF:000074">
    <property type="entry name" value="Retinol dehydrogenase type 1"/>
    <property type="match status" value="1"/>
</dbReference>
<dbReference type="Gene3D" id="3.40.50.720">
    <property type="entry name" value="NAD(P)-binding Rossmann-like Domain"/>
    <property type="match status" value="1"/>
</dbReference>
<dbReference type="InterPro" id="IPR036291">
    <property type="entry name" value="NAD(P)-bd_dom_sf"/>
</dbReference>
<dbReference type="InterPro" id="IPR020904">
    <property type="entry name" value="Sc_DH/Rdtase_CS"/>
</dbReference>
<dbReference type="InterPro" id="IPR002347">
    <property type="entry name" value="SDR_fam"/>
</dbReference>
<dbReference type="PANTHER" id="PTHR43313:SF3">
    <property type="entry name" value="17-BETA-HYDROXYSTEROID DEHYDROGENASE TYPE 2"/>
    <property type="match status" value="1"/>
</dbReference>
<dbReference type="PANTHER" id="PTHR43313">
    <property type="entry name" value="SHORT-CHAIN DEHYDROGENASE/REDUCTASE FAMILY 9C"/>
    <property type="match status" value="1"/>
</dbReference>
<dbReference type="Pfam" id="PF00106">
    <property type="entry name" value="adh_short"/>
    <property type="match status" value="1"/>
</dbReference>
<dbReference type="PRINTS" id="PR00081">
    <property type="entry name" value="GDHRDH"/>
</dbReference>
<dbReference type="PRINTS" id="PR00080">
    <property type="entry name" value="SDRFAMILY"/>
</dbReference>
<dbReference type="SUPFAM" id="SSF51735">
    <property type="entry name" value="NAD(P)-binding Rossmann-fold domains"/>
    <property type="match status" value="1"/>
</dbReference>
<dbReference type="PROSITE" id="PS00061">
    <property type="entry name" value="ADH_SHORT"/>
    <property type="match status" value="1"/>
</dbReference>